<feature type="chain" id="PRO_0000359317" description="5'-methylthioadenosine/S-adenosylhomocysteine nucleosidase">
    <location>
        <begin position="1"/>
        <end position="229"/>
    </location>
</feature>
<feature type="active site" description="Proton acceptor" evidence="1">
    <location>
        <position position="12"/>
    </location>
</feature>
<feature type="active site" description="Proton donor" evidence="1">
    <location>
        <position position="197"/>
    </location>
</feature>
<feature type="binding site" evidence="1">
    <location>
        <position position="78"/>
    </location>
    <ligand>
        <name>substrate</name>
    </ligand>
</feature>
<feature type="binding site" evidence="1">
    <location>
        <position position="152"/>
    </location>
    <ligand>
        <name>substrate</name>
    </ligand>
</feature>
<feature type="binding site" evidence="1">
    <location>
        <begin position="173"/>
        <end position="174"/>
    </location>
    <ligand>
        <name>substrate</name>
    </ligand>
</feature>
<comment type="function">
    <text evidence="1">Catalyzes the irreversible cleavage of the glycosidic bond in both 5'-methylthioadenosine (MTA) and S-adenosylhomocysteine (SAH/AdoHcy) to adenine and the corresponding thioribose, 5'-methylthioribose and S-ribosylhomocysteine, respectively. Also cleaves 5'-deoxyadenosine, a toxic by-product of radical S-adenosylmethionine (SAM) enzymes, into 5-deoxyribose and adenine.</text>
</comment>
<comment type="catalytic activity">
    <reaction evidence="1">
        <text>S-adenosyl-L-homocysteine + H2O = S-(5-deoxy-D-ribos-5-yl)-L-homocysteine + adenine</text>
        <dbReference type="Rhea" id="RHEA:17805"/>
        <dbReference type="ChEBI" id="CHEBI:15377"/>
        <dbReference type="ChEBI" id="CHEBI:16708"/>
        <dbReference type="ChEBI" id="CHEBI:57856"/>
        <dbReference type="ChEBI" id="CHEBI:58195"/>
        <dbReference type="EC" id="3.2.2.9"/>
    </reaction>
</comment>
<comment type="catalytic activity">
    <reaction evidence="1">
        <text>S-methyl-5'-thioadenosine + H2O = 5-(methylsulfanyl)-D-ribose + adenine</text>
        <dbReference type="Rhea" id="RHEA:13617"/>
        <dbReference type="ChEBI" id="CHEBI:15377"/>
        <dbReference type="ChEBI" id="CHEBI:16708"/>
        <dbReference type="ChEBI" id="CHEBI:17509"/>
        <dbReference type="ChEBI" id="CHEBI:78440"/>
        <dbReference type="EC" id="3.2.2.9"/>
    </reaction>
</comment>
<comment type="catalytic activity">
    <reaction evidence="1">
        <text>5'-deoxyadenosine + H2O = 5-deoxy-D-ribose + adenine</text>
        <dbReference type="Rhea" id="RHEA:29859"/>
        <dbReference type="ChEBI" id="CHEBI:15377"/>
        <dbReference type="ChEBI" id="CHEBI:16708"/>
        <dbReference type="ChEBI" id="CHEBI:17319"/>
        <dbReference type="ChEBI" id="CHEBI:149540"/>
        <dbReference type="EC" id="3.2.2.9"/>
    </reaction>
    <physiologicalReaction direction="left-to-right" evidence="1">
        <dbReference type="Rhea" id="RHEA:29860"/>
    </physiologicalReaction>
</comment>
<comment type="pathway">
    <text evidence="1">Amino-acid biosynthesis; L-methionine biosynthesis via salvage pathway; S-methyl-5-thio-alpha-D-ribose 1-phosphate from S-methyl-5'-thioadenosine (hydrolase route): step 1/2.</text>
</comment>
<comment type="similarity">
    <text evidence="1">Belongs to the PNP/UDP phosphorylase family. MtnN subfamily.</text>
</comment>
<name>MTNN_MANSM</name>
<evidence type="ECO:0000255" key="1">
    <source>
        <dbReference type="HAMAP-Rule" id="MF_01684"/>
    </source>
</evidence>
<accession>Q65SB6</accession>
<reference key="1">
    <citation type="journal article" date="2004" name="Nat. Biotechnol.">
        <title>The genome sequence of the capnophilic rumen bacterium Mannheimia succiniciproducens.</title>
        <authorList>
            <person name="Hong S.H."/>
            <person name="Kim J.S."/>
            <person name="Lee S.Y."/>
            <person name="In Y.H."/>
            <person name="Choi S.S."/>
            <person name="Rih J.-K."/>
            <person name="Kim C.H."/>
            <person name="Jeong H."/>
            <person name="Hur C.G."/>
            <person name="Kim J.J."/>
        </authorList>
    </citation>
    <scope>NUCLEOTIDE SEQUENCE [LARGE SCALE GENOMIC DNA]</scope>
    <source>
        <strain>KCTC 0769BP / MBEL55E</strain>
    </source>
</reference>
<protein>
    <recommendedName>
        <fullName evidence="1">5'-methylthioadenosine/S-adenosylhomocysteine nucleosidase</fullName>
        <shortName evidence="1">MTA/SAH nucleosidase</shortName>
        <shortName evidence="1">MTAN</shortName>
        <ecNumber evidence="1">3.2.2.9</ecNumber>
    </recommendedName>
    <alternativeName>
        <fullName evidence="1">5'-deoxyadenosine nucleosidase</fullName>
        <shortName evidence="1">DOA nucleosidase</shortName>
        <shortName evidence="1">dAdo nucleosidase</shortName>
    </alternativeName>
    <alternativeName>
        <fullName evidence="1">5'-methylthioadenosine nucleosidase</fullName>
        <shortName evidence="1">MTA nucleosidase</shortName>
    </alternativeName>
    <alternativeName>
        <fullName evidence="1">S-adenosylhomocysteine nucleosidase</fullName>
        <shortName evidence="1">AdoHcy nucleosidase</shortName>
        <shortName evidence="1">SAH nucleosidase</shortName>
        <shortName evidence="1">SRH nucleosidase</shortName>
    </alternativeName>
</protein>
<keyword id="KW-0028">Amino-acid biosynthesis</keyword>
<keyword id="KW-0378">Hydrolase</keyword>
<keyword id="KW-0486">Methionine biosynthesis</keyword>
<dbReference type="EC" id="3.2.2.9" evidence="1"/>
<dbReference type="EMBL" id="AE016827">
    <property type="protein sequence ID" value="AAU38144.1"/>
    <property type="molecule type" value="Genomic_DNA"/>
</dbReference>
<dbReference type="RefSeq" id="WP_011200710.1">
    <property type="nucleotide sequence ID" value="NC_006300.1"/>
</dbReference>
<dbReference type="SMR" id="Q65SB6"/>
<dbReference type="STRING" id="221988.MS1537"/>
<dbReference type="KEGG" id="msu:MS1537"/>
<dbReference type="eggNOG" id="COG0775">
    <property type="taxonomic scope" value="Bacteria"/>
</dbReference>
<dbReference type="HOGENOM" id="CLU_031248_2_2_6"/>
<dbReference type="OrthoDB" id="9792278at2"/>
<dbReference type="UniPathway" id="UPA00904">
    <property type="reaction ID" value="UER00871"/>
</dbReference>
<dbReference type="Proteomes" id="UP000000607">
    <property type="component" value="Chromosome"/>
</dbReference>
<dbReference type="GO" id="GO:0005829">
    <property type="term" value="C:cytosol"/>
    <property type="evidence" value="ECO:0007669"/>
    <property type="project" value="TreeGrafter"/>
</dbReference>
<dbReference type="GO" id="GO:0008782">
    <property type="term" value="F:adenosylhomocysteine nucleosidase activity"/>
    <property type="evidence" value="ECO:0007669"/>
    <property type="project" value="UniProtKB-UniRule"/>
</dbReference>
<dbReference type="GO" id="GO:0008930">
    <property type="term" value="F:methylthioadenosine nucleosidase activity"/>
    <property type="evidence" value="ECO:0007669"/>
    <property type="project" value="UniProtKB-UniRule"/>
</dbReference>
<dbReference type="GO" id="GO:0019509">
    <property type="term" value="P:L-methionine salvage from methylthioadenosine"/>
    <property type="evidence" value="ECO:0007669"/>
    <property type="project" value="UniProtKB-UniRule"/>
</dbReference>
<dbReference type="GO" id="GO:0019284">
    <property type="term" value="P:L-methionine salvage from S-adenosylmethionine"/>
    <property type="evidence" value="ECO:0007669"/>
    <property type="project" value="TreeGrafter"/>
</dbReference>
<dbReference type="GO" id="GO:0009164">
    <property type="term" value="P:nucleoside catabolic process"/>
    <property type="evidence" value="ECO:0007669"/>
    <property type="project" value="InterPro"/>
</dbReference>
<dbReference type="CDD" id="cd09008">
    <property type="entry name" value="MTAN"/>
    <property type="match status" value="1"/>
</dbReference>
<dbReference type="FunFam" id="3.40.50.1580:FF:000001">
    <property type="entry name" value="MTA/SAH nucleosidase family protein"/>
    <property type="match status" value="1"/>
</dbReference>
<dbReference type="Gene3D" id="3.40.50.1580">
    <property type="entry name" value="Nucleoside phosphorylase domain"/>
    <property type="match status" value="1"/>
</dbReference>
<dbReference type="HAMAP" id="MF_01684">
    <property type="entry name" value="Salvage_MtnN"/>
    <property type="match status" value="1"/>
</dbReference>
<dbReference type="InterPro" id="IPR010049">
    <property type="entry name" value="MTA_SAH_Nsdase"/>
</dbReference>
<dbReference type="InterPro" id="IPR000845">
    <property type="entry name" value="Nucleoside_phosphorylase_d"/>
</dbReference>
<dbReference type="InterPro" id="IPR035994">
    <property type="entry name" value="Nucleoside_phosphorylase_sf"/>
</dbReference>
<dbReference type="NCBIfam" id="TIGR01704">
    <property type="entry name" value="MTA_SAH-Nsdase"/>
    <property type="match status" value="1"/>
</dbReference>
<dbReference type="NCBIfam" id="NF004079">
    <property type="entry name" value="PRK05584.1"/>
    <property type="match status" value="1"/>
</dbReference>
<dbReference type="PANTHER" id="PTHR46832">
    <property type="entry name" value="5'-METHYLTHIOADENOSINE/S-ADENOSYLHOMOCYSTEINE NUCLEOSIDASE"/>
    <property type="match status" value="1"/>
</dbReference>
<dbReference type="PANTHER" id="PTHR46832:SF1">
    <property type="entry name" value="5'-METHYLTHIOADENOSINE_S-ADENOSYLHOMOCYSTEINE NUCLEOSIDASE"/>
    <property type="match status" value="1"/>
</dbReference>
<dbReference type="Pfam" id="PF01048">
    <property type="entry name" value="PNP_UDP_1"/>
    <property type="match status" value="1"/>
</dbReference>
<dbReference type="SUPFAM" id="SSF53167">
    <property type="entry name" value="Purine and uridine phosphorylases"/>
    <property type="match status" value="1"/>
</dbReference>
<sequence>MKIGIVGAMKQEVEILANLMRNQTVTQVAGCTIYEGLINGKQVALLQSGIGKVAAAIGTTALLQLAKPDVVLNTGSAGGVADGLKVGDIVISTETAYHDADVTAFGYAKGQLPACPATFISDEKLTALAKQVAQAQGHNVKRGLICSGDSFIAGGERLAQIKADFPNVTAVEMEAAAIAQVCHVFRVPFVVVRAISDAGDGQAGMSFEEFLPIAAKQSSAMIIGMLEQL</sequence>
<organism>
    <name type="scientific">Mannheimia succiniciproducens (strain KCTC 0769BP / MBEL55E)</name>
    <dbReference type="NCBI Taxonomy" id="221988"/>
    <lineage>
        <taxon>Bacteria</taxon>
        <taxon>Pseudomonadati</taxon>
        <taxon>Pseudomonadota</taxon>
        <taxon>Gammaproteobacteria</taxon>
        <taxon>Pasteurellales</taxon>
        <taxon>Pasteurellaceae</taxon>
        <taxon>Basfia</taxon>
    </lineage>
</organism>
<proteinExistence type="inferred from homology"/>
<gene>
    <name evidence="1" type="primary">mtnN</name>
    <name type="ordered locus">MS1537</name>
</gene>